<accession>A8FKN5</accession>
<comment type="similarity">
    <text evidence="1">Belongs to the bacterial ribosomal protein bL28 family.</text>
</comment>
<organism>
    <name type="scientific">Campylobacter jejuni subsp. jejuni serotype O:6 (strain 81116 / NCTC 11828)</name>
    <dbReference type="NCBI Taxonomy" id="407148"/>
    <lineage>
        <taxon>Bacteria</taxon>
        <taxon>Pseudomonadati</taxon>
        <taxon>Campylobacterota</taxon>
        <taxon>Epsilonproteobacteria</taxon>
        <taxon>Campylobacterales</taxon>
        <taxon>Campylobacteraceae</taxon>
        <taxon>Campylobacter</taxon>
    </lineage>
</organism>
<evidence type="ECO:0000255" key="1">
    <source>
        <dbReference type="HAMAP-Rule" id="MF_00373"/>
    </source>
</evidence>
<evidence type="ECO:0000305" key="2"/>
<reference key="1">
    <citation type="journal article" date="2007" name="J. Bacteriol.">
        <title>The complete genome sequence of Campylobacter jejuni strain 81116 (NCTC11828).</title>
        <authorList>
            <person name="Pearson B.M."/>
            <person name="Gaskin D.J.H."/>
            <person name="Segers R.P.A.M."/>
            <person name="Wells J.M."/>
            <person name="Nuijten P.J.M."/>
            <person name="van Vliet A.H.M."/>
        </authorList>
    </citation>
    <scope>NUCLEOTIDE SEQUENCE [LARGE SCALE GENOMIC DNA]</scope>
    <source>
        <strain>81116 / NCTC 11828</strain>
    </source>
</reference>
<protein>
    <recommendedName>
        <fullName evidence="1">Large ribosomal subunit protein bL28</fullName>
    </recommendedName>
    <alternativeName>
        <fullName evidence="2">50S ribosomal protein L28</fullName>
    </alternativeName>
</protein>
<name>RL28_CAMJ8</name>
<dbReference type="EMBL" id="CP000814">
    <property type="protein sequence ID" value="ABV52022.1"/>
    <property type="molecule type" value="Genomic_DNA"/>
</dbReference>
<dbReference type="RefSeq" id="WP_002854974.1">
    <property type="nucleotide sequence ID" value="NC_009839.1"/>
</dbReference>
<dbReference type="SMR" id="A8FKN5"/>
<dbReference type="KEGG" id="cju:C8J_0423"/>
<dbReference type="HOGENOM" id="CLU_064548_7_2_7"/>
<dbReference type="GO" id="GO:1990904">
    <property type="term" value="C:ribonucleoprotein complex"/>
    <property type="evidence" value="ECO:0007669"/>
    <property type="project" value="UniProtKB-KW"/>
</dbReference>
<dbReference type="GO" id="GO:0005840">
    <property type="term" value="C:ribosome"/>
    <property type="evidence" value="ECO:0007669"/>
    <property type="project" value="UniProtKB-KW"/>
</dbReference>
<dbReference type="GO" id="GO:0003735">
    <property type="term" value="F:structural constituent of ribosome"/>
    <property type="evidence" value="ECO:0007669"/>
    <property type="project" value="InterPro"/>
</dbReference>
<dbReference type="GO" id="GO:0006412">
    <property type="term" value="P:translation"/>
    <property type="evidence" value="ECO:0007669"/>
    <property type="project" value="UniProtKB-UniRule"/>
</dbReference>
<dbReference type="Gene3D" id="2.20.150.30">
    <property type="match status" value="1"/>
</dbReference>
<dbReference type="Gene3D" id="2.30.170.40">
    <property type="entry name" value="Ribosomal protein L28/L24"/>
    <property type="match status" value="1"/>
</dbReference>
<dbReference type="HAMAP" id="MF_00373">
    <property type="entry name" value="Ribosomal_bL28"/>
    <property type="match status" value="1"/>
</dbReference>
<dbReference type="InterPro" id="IPR050096">
    <property type="entry name" value="Bacterial_rp_bL28"/>
</dbReference>
<dbReference type="InterPro" id="IPR026569">
    <property type="entry name" value="Ribosomal_bL28"/>
</dbReference>
<dbReference type="InterPro" id="IPR034704">
    <property type="entry name" value="Ribosomal_bL28/bL31-like_sf"/>
</dbReference>
<dbReference type="InterPro" id="IPR001383">
    <property type="entry name" value="Ribosomal_bL28_bact-type"/>
</dbReference>
<dbReference type="InterPro" id="IPR037147">
    <property type="entry name" value="Ribosomal_bL28_sf"/>
</dbReference>
<dbReference type="NCBIfam" id="TIGR00009">
    <property type="entry name" value="L28"/>
    <property type="match status" value="1"/>
</dbReference>
<dbReference type="PANTHER" id="PTHR39080">
    <property type="entry name" value="50S RIBOSOMAL PROTEIN L28"/>
    <property type="match status" value="1"/>
</dbReference>
<dbReference type="PANTHER" id="PTHR39080:SF1">
    <property type="entry name" value="LARGE RIBOSOMAL SUBUNIT PROTEIN BL28A"/>
    <property type="match status" value="1"/>
</dbReference>
<dbReference type="Pfam" id="PF00830">
    <property type="entry name" value="Ribosomal_L28"/>
    <property type="match status" value="1"/>
</dbReference>
<dbReference type="SUPFAM" id="SSF143800">
    <property type="entry name" value="L28p-like"/>
    <property type="match status" value="1"/>
</dbReference>
<proteinExistence type="inferred from homology"/>
<feature type="chain" id="PRO_1000072132" description="Large ribosomal subunit protein bL28">
    <location>
        <begin position="1"/>
        <end position="64"/>
    </location>
</feature>
<gene>
    <name evidence="1" type="primary">rpmB</name>
    <name type="ordered locus">C8J_0423</name>
</gene>
<keyword id="KW-0687">Ribonucleoprotein</keyword>
<keyword id="KW-0689">Ribosomal protein</keyword>
<sequence length="64" mass="7195">MARVCQITGKGPMVGNNVSHANNKTKRRFLPNLRTVRVTLEDGTTRKMRIAASTLRTLKKQNSK</sequence>